<gene>
    <name evidence="1" type="primary">rutB</name>
    <name type="ordered locus">Hoch_3936</name>
</gene>
<keyword id="KW-0378">Hydrolase</keyword>
<keyword id="KW-1185">Reference proteome</keyword>
<reference key="1">
    <citation type="journal article" date="2010" name="Stand. Genomic Sci.">
        <title>Complete genome sequence of Haliangium ochraceum type strain (SMP-2).</title>
        <authorList>
            <person name="Ivanova N."/>
            <person name="Daum C."/>
            <person name="Lang E."/>
            <person name="Abt B."/>
            <person name="Kopitz M."/>
            <person name="Saunders E."/>
            <person name="Lapidus A."/>
            <person name="Lucas S."/>
            <person name="Glavina Del Rio T."/>
            <person name="Nolan M."/>
            <person name="Tice H."/>
            <person name="Copeland A."/>
            <person name="Cheng J.F."/>
            <person name="Chen F."/>
            <person name="Bruce D."/>
            <person name="Goodwin L."/>
            <person name="Pitluck S."/>
            <person name="Mavromatis K."/>
            <person name="Pati A."/>
            <person name="Mikhailova N."/>
            <person name="Chen A."/>
            <person name="Palaniappan K."/>
            <person name="Land M."/>
            <person name="Hauser L."/>
            <person name="Chang Y.J."/>
            <person name="Jeffries C.D."/>
            <person name="Detter J.C."/>
            <person name="Brettin T."/>
            <person name="Rohde M."/>
            <person name="Goker M."/>
            <person name="Bristow J."/>
            <person name="Markowitz V."/>
            <person name="Eisen J.A."/>
            <person name="Hugenholtz P."/>
            <person name="Kyrpides N.C."/>
            <person name="Klenk H.P."/>
        </authorList>
    </citation>
    <scope>NUCLEOTIDE SEQUENCE [LARGE SCALE GENOMIC DNA]</scope>
    <source>
        <strain>DSM 14365 / CIP 107738 / JCM 11303 / AJ 13395 / SMP-2</strain>
    </source>
</reference>
<comment type="function">
    <text evidence="1">Hydrolyzes ureidoacrylate to form aminoacrylate and carbamate. The carbamate hydrolyzes spontaneously, thereby releasing one of the nitrogen atoms of the pyrimidine ring as ammonia and one of its carbon atoms as CO2.</text>
</comment>
<comment type="catalytic activity">
    <reaction evidence="1">
        <text>(Z)-3-ureidoacrylate + H2O + H(+) = (Z)-3-aminoacrylate + NH4(+) + CO2</text>
        <dbReference type="Rhea" id="RHEA:42624"/>
        <dbReference type="ChEBI" id="CHEBI:15377"/>
        <dbReference type="ChEBI" id="CHEBI:15378"/>
        <dbReference type="ChEBI" id="CHEBI:16526"/>
        <dbReference type="ChEBI" id="CHEBI:28938"/>
        <dbReference type="ChEBI" id="CHEBI:59891"/>
        <dbReference type="ChEBI" id="CHEBI:59894"/>
        <dbReference type="EC" id="3.5.1.110"/>
    </reaction>
</comment>
<comment type="catalytic activity">
    <reaction evidence="1">
        <text>(Z)-3-ureidoacrylate + H2O = (Z)-3-aminoacrylate + carbamate + H(+)</text>
        <dbReference type="Rhea" id="RHEA:31603"/>
        <dbReference type="ChEBI" id="CHEBI:13941"/>
        <dbReference type="ChEBI" id="CHEBI:15377"/>
        <dbReference type="ChEBI" id="CHEBI:15378"/>
        <dbReference type="ChEBI" id="CHEBI:59891"/>
        <dbReference type="ChEBI" id="CHEBI:59894"/>
    </reaction>
</comment>
<comment type="catalytic activity">
    <reaction evidence="1">
        <text>(Z)-2-methylureidoacrylate + H2O + H(+) = (Z)-2-methylaminoacrylate + NH4(+) + CO2</text>
        <dbReference type="Rhea" id="RHEA:42620"/>
        <dbReference type="ChEBI" id="CHEBI:15377"/>
        <dbReference type="ChEBI" id="CHEBI:15378"/>
        <dbReference type="ChEBI" id="CHEBI:16526"/>
        <dbReference type="ChEBI" id="CHEBI:28938"/>
        <dbReference type="ChEBI" id="CHEBI:143783"/>
        <dbReference type="ChEBI" id="CHEBI:145735"/>
        <dbReference type="EC" id="3.5.1.110"/>
    </reaction>
</comment>
<comment type="similarity">
    <text evidence="1">Belongs to the isochorismatase family. RutB subfamily.</text>
</comment>
<feature type="chain" id="PRO_0000402687" description="Ureidoacrylate amidohydrolase RutB">
    <location>
        <begin position="1"/>
        <end position="241"/>
    </location>
</feature>
<feature type="active site" description="Proton acceptor" evidence="1">
    <location>
        <position position="38"/>
    </location>
</feature>
<feature type="active site" evidence="1">
    <location>
        <position position="147"/>
    </location>
</feature>
<feature type="active site" description="Nucleophile" evidence="1">
    <location>
        <position position="180"/>
    </location>
</feature>
<organism>
    <name type="scientific">Haliangium ochraceum (strain DSM 14365 / JCM 11303 / SMP-2)</name>
    <dbReference type="NCBI Taxonomy" id="502025"/>
    <lineage>
        <taxon>Bacteria</taxon>
        <taxon>Pseudomonadati</taxon>
        <taxon>Myxococcota</taxon>
        <taxon>Polyangia</taxon>
        <taxon>Haliangiales</taxon>
        <taxon>Kofleriaceae</taxon>
        <taxon>Haliangium</taxon>
    </lineage>
</organism>
<dbReference type="EC" id="3.5.1.110" evidence="1"/>
<dbReference type="EMBL" id="CP001804">
    <property type="protein sequence ID" value="ACY16435.1"/>
    <property type="molecule type" value="Genomic_DNA"/>
</dbReference>
<dbReference type="RefSeq" id="WP_012829034.1">
    <property type="nucleotide sequence ID" value="NC_013440.1"/>
</dbReference>
<dbReference type="SMR" id="D0LI56"/>
<dbReference type="STRING" id="502025.Hoch_3936"/>
<dbReference type="KEGG" id="hoh:Hoch_3936"/>
<dbReference type="eggNOG" id="COG1335">
    <property type="taxonomic scope" value="Bacteria"/>
</dbReference>
<dbReference type="HOGENOM" id="CLU_068979_8_0_7"/>
<dbReference type="OrthoDB" id="9791276at2"/>
<dbReference type="Proteomes" id="UP000001880">
    <property type="component" value="Chromosome"/>
</dbReference>
<dbReference type="GO" id="GO:0016811">
    <property type="term" value="F:hydrolase activity, acting on carbon-nitrogen (but not peptide) bonds, in linear amides"/>
    <property type="evidence" value="ECO:0007669"/>
    <property type="project" value="UniProtKB-UniRule"/>
</dbReference>
<dbReference type="GO" id="GO:0019740">
    <property type="term" value="P:nitrogen utilization"/>
    <property type="evidence" value="ECO:0007669"/>
    <property type="project" value="UniProtKB-UniRule"/>
</dbReference>
<dbReference type="GO" id="GO:0006212">
    <property type="term" value="P:uracil catabolic process"/>
    <property type="evidence" value="ECO:0007669"/>
    <property type="project" value="UniProtKB-UniRule"/>
</dbReference>
<dbReference type="CDD" id="cd00431">
    <property type="entry name" value="cysteine_hydrolases"/>
    <property type="match status" value="1"/>
</dbReference>
<dbReference type="Gene3D" id="3.40.50.850">
    <property type="entry name" value="Isochorismatase-like"/>
    <property type="match status" value="1"/>
</dbReference>
<dbReference type="HAMAP" id="MF_00830">
    <property type="entry name" value="RutB"/>
    <property type="match status" value="1"/>
</dbReference>
<dbReference type="InterPro" id="IPR000868">
    <property type="entry name" value="Isochorismatase-like_dom"/>
</dbReference>
<dbReference type="InterPro" id="IPR050272">
    <property type="entry name" value="Isochorismatase-like_hydrls"/>
</dbReference>
<dbReference type="InterPro" id="IPR036380">
    <property type="entry name" value="Isochorismatase-like_sf"/>
</dbReference>
<dbReference type="InterPro" id="IPR019916">
    <property type="entry name" value="RutB"/>
</dbReference>
<dbReference type="NCBIfam" id="TIGR03614">
    <property type="entry name" value="RutB"/>
    <property type="match status" value="1"/>
</dbReference>
<dbReference type="PANTHER" id="PTHR43540:SF6">
    <property type="entry name" value="ISOCHORISMATASE-LIKE DOMAIN-CONTAINING PROTEIN"/>
    <property type="match status" value="1"/>
</dbReference>
<dbReference type="PANTHER" id="PTHR43540">
    <property type="entry name" value="PEROXYUREIDOACRYLATE/UREIDOACRYLATE AMIDOHYDROLASE-RELATED"/>
    <property type="match status" value="1"/>
</dbReference>
<dbReference type="Pfam" id="PF00857">
    <property type="entry name" value="Isochorismatase"/>
    <property type="match status" value="1"/>
</dbReference>
<dbReference type="SUPFAM" id="SSF52499">
    <property type="entry name" value="Isochorismatase-like hydrolases"/>
    <property type="match status" value="1"/>
</dbReference>
<name>RUTB_HALO1</name>
<accession>D0LI56</accession>
<protein>
    <recommendedName>
        <fullName evidence="1">Ureidoacrylate amidohydrolase RutB</fullName>
        <ecNumber evidence="1">3.5.1.110</ecNumber>
    </recommendedName>
</protein>
<sequence>MTGNLSGENPAESVSTTLAARPEDIALDVAHTAVVVIDMQNAYASPGGYVDLAGFDIAGAAGVIGRIATVLESARTAGMQVVFLQNGWDPDYVEAGGPQSPNWHKSNALKTMRARPELEGKLLARGGWDYALVDGLKPQPGDIQVHKPRYSAFFHSQLDSVLRARGIRNLVFVGIATNVCVESTLRDGFHLEYFCVLLEDATHHLGPEFVQAATVYNVEKFFGWVSTVEDFCASMRAIAKP</sequence>
<proteinExistence type="inferred from homology"/>
<evidence type="ECO:0000255" key="1">
    <source>
        <dbReference type="HAMAP-Rule" id="MF_00830"/>
    </source>
</evidence>